<protein>
    <recommendedName>
        <fullName evidence="1">2-phospho-L-lactate transferase</fullName>
        <ecNumber evidence="1">2.7.8.28</ecNumber>
    </recommendedName>
</protein>
<sequence length="309" mass="33766">MIIFSGGTGTPKLLDGLKEILPAEEMTVVVNTAEDLWVSGNLICPDLDTVIYLFSDQIDRNRWWGVKDDTFLTYERMQKLGVMESMKLGDCDRATHIIRSNFIRSGISLTDAILELASIFGIDAKILPMSDDPVSTYIEAPEAILHFQDFWIGKHGEPEVLGVDITGISEASISPKVLEALENDDNVLIGPSNPITSIGPIISLPGMKDLLKKKKVVAVSPIIGNAPVSGPAGKLMKACGLEVSSMGVAEYYQDFLDIFVFDERDQADEFAFEKLGCRASRADTLMTSTEKSKELAELVVGLFDTIVCP</sequence>
<gene>
    <name evidence="1" type="primary">cofD</name>
    <name type="ordered locus">Mbar_A1631</name>
</gene>
<comment type="function">
    <text evidence="1">Catalyzes the transfer of the 2-phospholactate moiety from (2S)-lactyl-2-diphospho-5'-guanosine to 7,8-didemethyl-8-hydroxy-5-deazariboflavin (FO) with the formation of oxidized coenzyme F420-0 and GMP.</text>
</comment>
<comment type="catalytic activity">
    <reaction evidence="1">
        <text>(2S)-lactyl-2-diphospho-5'-guanosine + 7,8-didemethyl-8-hydroxy-5-deazariboflavin = oxidized coenzyme F420-0 + GMP + H(+)</text>
        <dbReference type="Rhea" id="RHEA:63444"/>
        <dbReference type="ChEBI" id="CHEBI:15378"/>
        <dbReference type="ChEBI" id="CHEBI:58115"/>
        <dbReference type="ChEBI" id="CHEBI:59435"/>
        <dbReference type="ChEBI" id="CHEBI:59904"/>
        <dbReference type="ChEBI" id="CHEBI:59907"/>
        <dbReference type="EC" id="2.7.8.28"/>
    </reaction>
</comment>
<comment type="cofactor">
    <cofactor evidence="1">
        <name>Mg(2+)</name>
        <dbReference type="ChEBI" id="CHEBI:18420"/>
    </cofactor>
</comment>
<comment type="pathway">
    <text evidence="1">Cofactor biosynthesis; coenzyme F420 biosynthesis.</text>
</comment>
<comment type="subunit">
    <text evidence="1">Homodimer.</text>
</comment>
<comment type="similarity">
    <text evidence="1">Belongs to the CofD family.</text>
</comment>
<organism>
    <name type="scientific">Methanosarcina barkeri (strain Fusaro / DSM 804)</name>
    <dbReference type="NCBI Taxonomy" id="269797"/>
    <lineage>
        <taxon>Archaea</taxon>
        <taxon>Methanobacteriati</taxon>
        <taxon>Methanobacteriota</taxon>
        <taxon>Stenosarchaea group</taxon>
        <taxon>Methanomicrobia</taxon>
        <taxon>Methanosarcinales</taxon>
        <taxon>Methanosarcinaceae</taxon>
        <taxon>Methanosarcina</taxon>
    </lineage>
</organism>
<keyword id="KW-0460">Magnesium</keyword>
<keyword id="KW-0808">Transferase</keyword>
<accession>Q46C16</accession>
<feature type="chain" id="PRO_0000259479" description="2-phospho-L-lactate transferase">
    <location>
        <begin position="1"/>
        <end position="309"/>
    </location>
</feature>
<feature type="binding site" evidence="1">
    <location>
        <position position="48"/>
    </location>
    <ligand>
        <name>7,8-didemethyl-8-hydroxy-5-deazariboflavin</name>
        <dbReference type="ChEBI" id="CHEBI:59904"/>
    </ligand>
</feature>
<feature type="binding site" evidence="1">
    <location>
        <position position="87"/>
    </location>
    <ligand>
        <name>7,8-didemethyl-8-hydroxy-5-deazariboflavin</name>
        <dbReference type="ChEBI" id="CHEBI:59904"/>
    </ligand>
</feature>
<proteinExistence type="inferred from homology"/>
<evidence type="ECO:0000255" key="1">
    <source>
        <dbReference type="HAMAP-Rule" id="MF_01257"/>
    </source>
</evidence>
<name>COFD_METBF</name>
<dbReference type="EC" id="2.7.8.28" evidence="1"/>
<dbReference type="EMBL" id="CP000099">
    <property type="protein sequence ID" value="AAZ70576.1"/>
    <property type="molecule type" value="Genomic_DNA"/>
</dbReference>
<dbReference type="SMR" id="Q46C16"/>
<dbReference type="STRING" id="269797.Mbar_A1631"/>
<dbReference type="PaxDb" id="269797-Mbar_A1631"/>
<dbReference type="KEGG" id="mba:Mbar_A1631"/>
<dbReference type="eggNOG" id="arCOG04395">
    <property type="taxonomic scope" value="Archaea"/>
</dbReference>
<dbReference type="HOGENOM" id="CLU_055795_1_0_2"/>
<dbReference type="OrthoDB" id="59563at2157"/>
<dbReference type="UniPathway" id="UPA00071"/>
<dbReference type="GO" id="GO:0043743">
    <property type="term" value="F:LPPG:FO 2-phospho-L-lactate transferase activity"/>
    <property type="evidence" value="ECO:0007669"/>
    <property type="project" value="UniProtKB-EC"/>
</dbReference>
<dbReference type="GO" id="GO:0000287">
    <property type="term" value="F:magnesium ion binding"/>
    <property type="evidence" value="ECO:0007669"/>
    <property type="project" value="InterPro"/>
</dbReference>
<dbReference type="GO" id="GO:0052645">
    <property type="term" value="P:F420-0 metabolic process"/>
    <property type="evidence" value="ECO:0007669"/>
    <property type="project" value="UniProtKB-UniRule"/>
</dbReference>
<dbReference type="CDD" id="cd07186">
    <property type="entry name" value="CofD_like"/>
    <property type="match status" value="1"/>
</dbReference>
<dbReference type="Gene3D" id="1.10.8.240">
    <property type="entry name" value="CofD-like domain"/>
    <property type="match status" value="1"/>
</dbReference>
<dbReference type="Gene3D" id="3.40.50.10680">
    <property type="entry name" value="CofD-like domains"/>
    <property type="match status" value="1"/>
</dbReference>
<dbReference type="HAMAP" id="MF_01257">
    <property type="entry name" value="CofD"/>
    <property type="match status" value="1"/>
</dbReference>
<dbReference type="InterPro" id="IPR002882">
    <property type="entry name" value="CofD"/>
</dbReference>
<dbReference type="InterPro" id="IPR038136">
    <property type="entry name" value="CofD-like_dom_sf"/>
</dbReference>
<dbReference type="InterPro" id="IPR010115">
    <property type="entry name" value="FbiA/CofD"/>
</dbReference>
<dbReference type="NCBIfam" id="TIGR01819">
    <property type="entry name" value="F420_cofD"/>
    <property type="match status" value="1"/>
</dbReference>
<dbReference type="PANTHER" id="PTHR43007">
    <property type="entry name" value="2-PHOSPHO-L-LACTATE TRANSFERASE"/>
    <property type="match status" value="1"/>
</dbReference>
<dbReference type="PANTHER" id="PTHR43007:SF1">
    <property type="entry name" value="2-PHOSPHO-L-LACTATE TRANSFERASE"/>
    <property type="match status" value="1"/>
</dbReference>
<dbReference type="Pfam" id="PF01933">
    <property type="entry name" value="CofD"/>
    <property type="match status" value="1"/>
</dbReference>
<dbReference type="SUPFAM" id="SSF142338">
    <property type="entry name" value="CofD-like"/>
    <property type="match status" value="1"/>
</dbReference>
<reference key="1">
    <citation type="journal article" date="2006" name="J. Bacteriol.">
        <title>The Methanosarcina barkeri genome: comparative analysis with Methanosarcina acetivorans and Methanosarcina mazei reveals extensive rearrangement within methanosarcinal genomes.</title>
        <authorList>
            <person name="Maeder D.L."/>
            <person name="Anderson I."/>
            <person name="Brettin T.S."/>
            <person name="Bruce D.C."/>
            <person name="Gilna P."/>
            <person name="Han C.S."/>
            <person name="Lapidus A."/>
            <person name="Metcalf W.W."/>
            <person name="Saunders E."/>
            <person name="Tapia R."/>
            <person name="Sowers K.R."/>
        </authorList>
    </citation>
    <scope>NUCLEOTIDE SEQUENCE [LARGE SCALE GENOMIC DNA]</scope>
    <source>
        <strain>Fusaro / DSM 804</strain>
    </source>
</reference>